<name>MLAE_ECOL6</name>
<protein>
    <recommendedName>
        <fullName evidence="1">Intermembrane phospholipid transport system permease protein MlaE</fullName>
    </recommendedName>
</protein>
<comment type="function">
    <text evidence="1">Part of the ABC transporter complex MlaFEDB, which is involved in a phospholipid transport pathway that maintains lipid asymmetry in the outer membrane by retrograde trafficking of phospholipids from the outer membrane to the inner membrane. Probably responsible for the translocation of the substrate across the membrane.</text>
</comment>
<comment type="subunit">
    <text evidence="1">The complex is composed of two ATP-binding proteins (MlaF), two transmembrane proteins (MlaE), two cytoplasmic solute-binding proteins (MlaB) and six periplasmic solute-binding proteins (MlaD).</text>
</comment>
<comment type="subcellular location">
    <subcellularLocation>
        <location evidence="1">Cell inner membrane</location>
        <topology evidence="2">Multi-pass membrane protein</topology>
    </subcellularLocation>
</comment>
<comment type="similarity">
    <text evidence="3">Belongs to the MlaE permease family.</text>
</comment>
<keyword id="KW-0997">Cell inner membrane</keyword>
<keyword id="KW-1003">Cell membrane</keyword>
<keyword id="KW-0472">Membrane</keyword>
<keyword id="KW-1185">Reference proteome</keyword>
<keyword id="KW-0812">Transmembrane</keyword>
<keyword id="KW-1133">Transmembrane helix</keyword>
<keyword id="KW-0813">Transport</keyword>
<proteinExistence type="inferred from homology"/>
<sequence length="260" mass="27863">MLLNALASLGHKGIKTLRTFGRAGLMLFNALVGKPEFRKHAPLLVRQLYNVGVLSMLIIVVSGVFIGMVLGLQGYLVLTTYSAETSLGMLVALSLLRELGPVVAALLFAGRAGSALTAEIGLMRATEQLSSMEMMAVDPLRRVISPRFWAGVISLPLLTVIFVAVGIWGGSLVGVSWKGIDSGFFWSAMQNAVDWRMDLVNCLIKSVVFAITVTWISLFNGYDAIPTSAGISRATTRTVVHSSLAVLGLDFVLTALMFGN</sequence>
<dbReference type="EMBL" id="AE014075">
    <property type="protein sequence ID" value="AAN82394.1"/>
    <property type="molecule type" value="Genomic_DNA"/>
</dbReference>
<dbReference type="RefSeq" id="WP_000925795.1">
    <property type="nucleotide sequence ID" value="NZ_CP051263.1"/>
</dbReference>
<dbReference type="SMR" id="P64607"/>
<dbReference type="STRING" id="199310.c3954"/>
<dbReference type="GeneID" id="93778787"/>
<dbReference type="KEGG" id="ecc:c3954"/>
<dbReference type="eggNOG" id="COG0767">
    <property type="taxonomic scope" value="Bacteria"/>
</dbReference>
<dbReference type="HOGENOM" id="CLU_045686_1_1_6"/>
<dbReference type="BioCyc" id="ECOL199310:C3954-MONOMER"/>
<dbReference type="Proteomes" id="UP000001410">
    <property type="component" value="Chromosome"/>
</dbReference>
<dbReference type="GO" id="GO:0043190">
    <property type="term" value="C:ATP-binding cassette (ABC) transporter complex"/>
    <property type="evidence" value="ECO:0007669"/>
    <property type="project" value="InterPro"/>
</dbReference>
<dbReference type="GO" id="GO:0005548">
    <property type="term" value="F:phospholipid transporter activity"/>
    <property type="evidence" value="ECO:0007669"/>
    <property type="project" value="TreeGrafter"/>
</dbReference>
<dbReference type="InterPro" id="IPR003453">
    <property type="entry name" value="ABC_MlaE_roteobac"/>
</dbReference>
<dbReference type="InterPro" id="IPR053408">
    <property type="entry name" value="MlaE_Permease"/>
</dbReference>
<dbReference type="InterPro" id="IPR030802">
    <property type="entry name" value="Permease_MalE"/>
</dbReference>
<dbReference type="NCBIfam" id="TIGR00056">
    <property type="entry name" value="MlaE family lipid ABC transporter permease subunit"/>
    <property type="match status" value="1"/>
</dbReference>
<dbReference type="NCBIfam" id="NF033619">
    <property type="entry name" value="perm_MlaE_1"/>
    <property type="match status" value="1"/>
</dbReference>
<dbReference type="PANTHER" id="PTHR30188">
    <property type="entry name" value="ABC TRANSPORTER PERMEASE PROTEIN-RELATED"/>
    <property type="match status" value="1"/>
</dbReference>
<dbReference type="PANTHER" id="PTHR30188:SF4">
    <property type="entry name" value="PROTEIN TRIGALACTOSYLDIACYLGLYCEROL 1, CHLOROPLASTIC"/>
    <property type="match status" value="1"/>
</dbReference>
<dbReference type="Pfam" id="PF02405">
    <property type="entry name" value="MlaE"/>
    <property type="match status" value="1"/>
</dbReference>
<gene>
    <name evidence="1" type="primary">mlaE</name>
    <name type="ordered locus">c3954</name>
</gene>
<reference key="1">
    <citation type="journal article" date="2002" name="Proc. Natl. Acad. Sci. U.S.A.">
        <title>Extensive mosaic structure revealed by the complete genome sequence of uropathogenic Escherichia coli.</title>
        <authorList>
            <person name="Welch R.A."/>
            <person name="Burland V."/>
            <person name="Plunkett G. III"/>
            <person name="Redford P."/>
            <person name="Roesch P."/>
            <person name="Rasko D."/>
            <person name="Buckles E.L."/>
            <person name="Liou S.-R."/>
            <person name="Boutin A."/>
            <person name="Hackett J."/>
            <person name="Stroud D."/>
            <person name="Mayhew G.F."/>
            <person name="Rose D.J."/>
            <person name="Zhou S."/>
            <person name="Schwartz D.C."/>
            <person name="Perna N.T."/>
            <person name="Mobley H.L.T."/>
            <person name="Donnenberg M.S."/>
            <person name="Blattner F.R."/>
        </authorList>
    </citation>
    <scope>NUCLEOTIDE SEQUENCE [LARGE SCALE GENOMIC DNA]</scope>
    <source>
        <strain>CFT073 / ATCC 700928 / UPEC</strain>
    </source>
</reference>
<evidence type="ECO:0000250" key="1">
    <source>
        <dbReference type="UniProtKB" id="P64606"/>
    </source>
</evidence>
<evidence type="ECO:0000255" key="2"/>
<evidence type="ECO:0000305" key="3"/>
<organism>
    <name type="scientific">Escherichia coli O6:H1 (strain CFT073 / ATCC 700928 / UPEC)</name>
    <dbReference type="NCBI Taxonomy" id="199310"/>
    <lineage>
        <taxon>Bacteria</taxon>
        <taxon>Pseudomonadati</taxon>
        <taxon>Pseudomonadota</taxon>
        <taxon>Gammaproteobacteria</taxon>
        <taxon>Enterobacterales</taxon>
        <taxon>Enterobacteriaceae</taxon>
        <taxon>Escherichia</taxon>
    </lineage>
</organism>
<accession>P64607</accession>
<accession>P45392</accession>
<feature type="chain" id="PRO_0000169467" description="Intermembrane phospholipid transport system permease protein MlaE">
    <location>
        <begin position="1"/>
        <end position="260"/>
    </location>
</feature>
<feature type="topological domain" description="Cytoplasmic" evidence="1">
    <location>
        <begin position="1"/>
        <end position="50"/>
    </location>
</feature>
<feature type="transmembrane region" description="Helical" evidence="2">
    <location>
        <begin position="51"/>
        <end position="71"/>
    </location>
</feature>
<feature type="topological domain" description="Periplasmic" evidence="1">
    <location>
        <begin position="72"/>
        <end position="88"/>
    </location>
</feature>
<feature type="transmembrane region" description="Helical" evidence="2">
    <location>
        <begin position="89"/>
        <end position="109"/>
    </location>
</feature>
<feature type="topological domain" description="Cytoplasmic" evidence="1">
    <location>
        <begin position="110"/>
        <end position="147"/>
    </location>
</feature>
<feature type="transmembrane region" description="Helical" evidence="2">
    <location>
        <begin position="148"/>
        <end position="168"/>
    </location>
</feature>
<feature type="topological domain" description="Periplasmic" evidence="1">
    <location>
        <begin position="169"/>
        <end position="198"/>
    </location>
</feature>
<feature type="transmembrane region" description="Helical" evidence="2">
    <location>
        <begin position="199"/>
        <end position="219"/>
    </location>
</feature>
<feature type="topological domain" description="Cytoplasmic" evidence="1">
    <location>
        <begin position="220"/>
        <end position="238"/>
    </location>
</feature>
<feature type="transmembrane region" description="Helical" evidence="2">
    <location>
        <begin position="239"/>
        <end position="259"/>
    </location>
</feature>
<feature type="topological domain" description="Periplasmic" evidence="1">
    <location>
        <position position="260"/>
    </location>
</feature>